<comment type="function">
    <text evidence="1">Catalyzes the NADPH-dependent reduction of L-glutamate 5-phosphate into L-glutamate 5-semialdehyde and phosphate. The product spontaneously undergoes cyclization to form 1-pyrroline-5-carboxylate.</text>
</comment>
<comment type="catalytic activity">
    <reaction evidence="1">
        <text>L-glutamate 5-semialdehyde + phosphate + NADP(+) = L-glutamyl 5-phosphate + NADPH + H(+)</text>
        <dbReference type="Rhea" id="RHEA:19541"/>
        <dbReference type="ChEBI" id="CHEBI:15378"/>
        <dbReference type="ChEBI" id="CHEBI:43474"/>
        <dbReference type="ChEBI" id="CHEBI:57783"/>
        <dbReference type="ChEBI" id="CHEBI:58066"/>
        <dbReference type="ChEBI" id="CHEBI:58274"/>
        <dbReference type="ChEBI" id="CHEBI:58349"/>
        <dbReference type="EC" id="1.2.1.41"/>
    </reaction>
</comment>
<comment type="pathway">
    <text evidence="1">Amino-acid biosynthesis; L-proline biosynthesis; L-glutamate 5-semialdehyde from L-glutamate: step 2/2.</text>
</comment>
<comment type="subcellular location">
    <subcellularLocation>
        <location evidence="1">Cytoplasm</location>
    </subcellularLocation>
</comment>
<comment type="similarity">
    <text evidence="1">Belongs to the gamma-glutamyl phosphate reductase family.</text>
</comment>
<evidence type="ECO:0000255" key="1">
    <source>
        <dbReference type="HAMAP-Rule" id="MF_00412"/>
    </source>
</evidence>
<name>PROA_PSEF5</name>
<sequence length="421" mass="45393">MTESVLDYMTRLGRAARQASRVIARATTAQKNRALLAAADALDAARPELTAANEQDLANGRANGLEPALLDRLALTPARIDEMIEGLRQVAKLPDPIGEIRDMRYLPSGIQVGKMRVPLGVIGIIYESRPNVTIDAASLCLKSGNATILRGGSEAIHSNRAIATCIQQGLAAADLPPHVVQVVETTDRAAVGALITMPEFVDVIVPRGGKSLIERVSRDAKVPVIKHLDGVCHVYIDVAADLDKAIRIADNAKTQRYAPCNTMETLLVHSAIAERVLPPLAAIYRDKGVELRGCAQTRALLGAGVLEATEEDWRTEYTAPILSIRVLDNLEQAIEHINTYGSHHTDSIVTENFSDARRFLNEVDSSSVMVNASTRFADGFEYGLGAEIGISTDKLHARGPVGLEGLTSEKYVVFGDGHVRT</sequence>
<accession>Q4K5F9</accession>
<proteinExistence type="inferred from homology"/>
<keyword id="KW-0028">Amino-acid biosynthesis</keyword>
<keyword id="KW-0963">Cytoplasm</keyword>
<keyword id="KW-0521">NADP</keyword>
<keyword id="KW-0560">Oxidoreductase</keyword>
<keyword id="KW-0641">Proline biosynthesis</keyword>
<organism>
    <name type="scientific">Pseudomonas fluorescens (strain ATCC BAA-477 / NRRL B-23932 / Pf-5)</name>
    <dbReference type="NCBI Taxonomy" id="220664"/>
    <lineage>
        <taxon>Bacteria</taxon>
        <taxon>Pseudomonadati</taxon>
        <taxon>Pseudomonadota</taxon>
        <taxon>Gammaproteobacteria</taxon>
        <taxon>Pseudomonadales</taxon>
        <taxon>Pseudomonadaceae</taxon>
        <taxon>Pseudomonas</taxon>
    </lineage>
</organism>
<feature type="chain" id="PRO_0000230014" description="Gamma-glutamyl phosphate reductase">
    <location>
        <begin position="1"/>
        <end position="421"/>
    </location>
</feature>
<protein>
    <recommendedName>
        <fullName evidence="1">Gamma-glutamyl phosphate reductase</fullName>
        <shortName evidence="1">GPR</shortName>
        <ecNumber evidence="1">1.2.1.41</ecNumber>
    </recommendedName>
    <alternativeName>
        <fullName evidence="1">Glutamate-5-semialdehyde dehydrogenase</fullName>
    </alternativeName>
    <alternativeName>
        <fullName evidence="1">Glutamyl-gamma-semialdehyde dehydrogenase</fullName>
        <shortName evidence="1">GSA dehydrogenase</shortName>
    </alternativeName>
</protein>
<gene>
    <name evidence="1" type="primary">proA</name>
    <name type="ordered locus">PFL_5456</name>
</gene>
<reference key="1">
    <citation type="journal article" date="2005" name="Nat. Biotechnol.">
        <title>Complete genome sequence of the plant commensal Pseudomonas fluorescens Pf-5.</title>
        <authorList>
            <person name="Paulsen I.T."/>
            <person name="Press C.M."/>
            <person name="Ravel J."/>
            <person name="Kobayashi D.Y."/>
            <person name="Myers G.S.A."/>
            <person name="Mavrodi D.V."/>
            <person name="DeBoy R.T."/>
            <person name="Seshadri R."/>
            <person name="Ren Q."/>
            <person name="Madupu R."/>
            <person name="Dodson R.J."/>
            <person name="Durkin A.S."/>
            <person name="Brinkac L.M."/>
            <person name="Daugherty S.C."/>
            <person name="Sullivan S.A."/>
            <person name="Rosovitz M.J."/>
            <person name="Gwinn M.L."/>
            <person name="Zhou L."/>
            <person name="Schneider D.J."/>
            <person name="Cartinhour S.W."/>
            <person name="Nelson W.C."/>
            <person name="Weidman J."/>
            <person name="Watkins K."/>
            <person name="Tran K."/>
            <person name="Khouri H."/>
            <person name="Pierson E.A."/>
            <person name="Pierson L.S. III"/>
            <person name="Thomashow L.S."/>
            <person name="Loper J.E."/>
        </authorList>
    </citation>
    <scope>NUCLEOTIDE SEQUENCE [LARGE SCALE GENOMIC DNA]</scope>
    <source>
        <strain>ATCC BAA-477 / NRRL B-23932 / Pf-5</strain>
    </source>
</reference>
<dbReference type="EC" id="1.2.1.41" evidence="1"/>
<dbReference type="EMBL" id="CP000076">
    <property type="protein sequence ID" value="AAY94666.2"/>
    <property type="molecule type" value="Genomic_DNA"/>
</dbReference>
<dbReference type="RefSeq" id="WP_011063674.1">
    <property type="nucleotide sequence ID" value="NC_004129.6"/>
</dbReference>
<dbReference type="SMR" id="Q4K5F9"/>
<dbReference type="STRING" id="220664.PFL_5456"/>
<dbReference type="KEGG" id="pfl:PFL_5456"/>
<dbReference type="PATRIC" id="fig|220664.5.peg.5570"/>
<dbReference type="eggNOG" id="COG0014">
    <property type="taxonomic scope" value="Bacteria"/>
</dbReference>
<dbReference type="HOGENOM" id="CLU_030231_0_0_6"/>
<dbReference type="UniPathway" id="UPA00098">
    <property type="reaction ID" value="UER00360"/>
</dbReference>
<dbReference type="Proteomes" id="UP000008540">
    <property type="component" value="Chromosome"/>
</dbReference>
<dbReference type="GO" id="GO:0005737">
    <property type="term" value="C:cytoplasm"/>
    <property type="evidence" value="ECO:0007669"/>
    <property type="project" value="UniProtKB-SubCell"/>
</dbReference>
<dbReference type="GO" id="GO:0004350">
    <property type="term" value="F:glutamate-5-semialdehyde dehydrogenase activity"/>
    <property type="evidence" value="ECO:0007669"/>
    <property type="project" value="UniProtKB-UniRule"/>
</dbReference>
<dbReference type="GO" id="GO:0050661">
    <property type="term" value="F:NADP binding"/>
    <property type="evidence" value="ECO:0007669"/>
    <property type="project" value="InterPro"/>
</dbReference>
<dbReference type="GO" id="GO:0055129">
    <property type="term" value="P:L-proline biosynthetic process"/>
    <property type="evidence" value="ECO:0007669"/>
    <property type="project" value="UniProtKB-UniRule"/>
</dbReference>
<dbReference type="CDD" id="cd07079">
    <property type="entry name" value="ALDH_F18-19_ProA-GPR"/>
    <property type="match status" value="1"/>
</dbReference>
<dbReference type="FunFam" id="3.40.309.10:FF:000006">
    <property type="entry name" value="Gamma-glutamyl phosphate reductase"/>
    <property type="match status" value="1"/>
</dbReference>
<dbReference type="Gene3D" id="3.40.605.10">
    <property type="entry name" value="Aldehyde Dehydrogenase, Chain A, domain 1"/>
    <property type="match status" value="1"/>
</dbReference>
<dbReference type="Gene3D" id="3.40.309.10">
    <property type="entry name" value="Aldehyde Dehydrogenase, Chain A, domain 2"/>
    <property type="match status" value="1"/>
</dbReference>
<dbReference type="HAMAP" id="MF_00412">
    <property type="entry name" value="ProA"/>
    <property type="match status" value="1"/>
</dbReference>
<dbReference type="InterPro" id="IPR016161">
    <property type="entry name" value="Ald_DH/histidinol_DH"/>
</dbReference>
<dbReference type="InterPro" id="IPR016163">
    <property type="entry name" value="Ald_DH_C"/>
</dbReference>
<dbReference type="InterPro" id="IPR016162">
    <property type="entry name" value="Ald_DH_N"/>
</dbReference>
<dbReference type="InterPro" id="IPR015590">
    <property type="entry name" value="Aldehyde_DH_dom"/>
</dbReference>
<dbReference type="InterPro" id="IPR012134">
    <property type="entry name" value="Glu-5-SA_DH"/>
</dbReference>
<dbReference type="InterPro" id="IPR000965">
    <property type="entry name" value="GPR_dom"/>
</dbReference>
<dbReference type="NCBIfam" id="NF001221">
    <property type="entry name" value="PRK00197.1"/>
    <property type="match status" value="1"/>
</dbReference>
<dbReference type="NCBIfam" id="TIGR00407">
    <property type="entry name" value="proA"/>
    <property type="match status" value="1"/>
</dbReference>
<dbReference type="PANTHER" id="PTHR11063:SF8">
    <property type="entry name" value="DELTA-1-PYRROLINE-5-CARBOXYLATE SYNTHASE"/>
    <property type="match status" value="1"/>
</dbReference>
<dbReference type="PANTHER" id="PTHR11063">
    <property type="entry name" value="GLUTAMATE SEMIALDEHYDE DEHYDROGENASE"/>
    <property type="match status" value="1"/>
</dbReference>
<dbReference type="Pfam" id="PF00171">
    <property type="entry name" value="Aldedh"/>
    <property type="match status" value="2"/>
</dbReference>
<dbReference type="PIRSF" id="PIRSF000151">
    <property type="entry name" value="GPR"/>
    <property type="match status" value="1"/>
</dbReference>
<dbReference type="SUPFAM" id="SSF53720">
    <property type="entry name" value="ALDH-like"/>
    <property type="match status" value="1"/>
</dbReference>